<sequence>MDIFIVKDNKYPKVDNDDNEVFILLGNHNDFIRSKLTKLKEHVFFSEYIVTPDTYGSLCVELNGSSFQHGGRYIEVEEFIDTGRQVRWCSTSNHISEDIPEDIHTDKFVIYDIYTFDSFKNKRLVFVQVPTSLGDDSYLTNPLLSPYYRNSVARQMVNDMIFNQDSFLKYLLEHLIRSHYRVSKHITIVRYKDTEELNLTRICYNRDKFKAFAFAWFNGVLENEKVLDTYKKVSDLI</sequence>
<comment type="function">
    <text evidence="1">Late protein which is part of a large complex required for early virion morphogenesis. This complex participates in the formation of virosomes and the incorporation of virosomal contents into nascent immature virions (By similarity).</text>
</comment>
<comment type="subcellular location">
    <subcellularLocation>
        <location evidence="1">Virion</location>
    </subcellularLocation>
    <text evidence="1">Localizes to the virion core.</text>
</comment>
<comment type="induction">
    <text>Expressed in the late phase of the viral replicative cycle.</text>
</comment>
<comment type="similarity">
    <text evidence="2">Belongs to the chordopoxvirinae D3 family.</text>
</comment>
<accession>Q8V2R6</accession>
<evidence type="ECO:0000250" key="1"/>
<evidence type="ECO:0000305" key="2"/>
<protein>
    <recommendedName>
        <fullName>27 kDa core protein</fullName>
    </recommendedName>
</protein>
<name>D3_CAMPM</name>
<feature type="chain" id="PRO_0000099432" description="27 kDa core protein">
    <location>
        <begin position="1"/>
        <end position="237"/>
    </location>
</feature>
<gene>
    <name type="ordered locus">CMLV105</name>
</gene>
<keyword id="KW-0426">Late protein</keyword>
<keyword id="KW-0946">Virion</keyword>
<organismHost>
    <name type="scientific">Camelus</name>
    <dbReference type="NCBI Taxonomy" id="9836"/>
</organismHost>
<dbReference type="EMBL" id="AF438165">
    <property type="protein sequence ID" value="AAL73812.1"/>
    <property type="molecule type" value="Genomic_DNA"/>
</dbReference>
<dbReference type="RefSeq" id="NP_570496.1">
    <property type="nucleotide sequence ID" value="NC_003391.1"/>
</dbReference>
<dbReference type="KEGG" id="vg:932607"/>
<dbReference type="Proteomes" id="UP000152221">
    <property type="component" value="Genome"/>
</dbReference>
<dbReference type="GO" id="GO:0044423">
    <property type="term" value="C:virion component"/>
    <property type="evidence" value="ECO:0007669"/>
    <property type="project" value="UniProtKB-KW"/>
</dbReference>
<dbReference type="InterPro" id="IPR007660">
    <property type="entry name" value="Poxvirus_D3"/>
</dbReference>
<dbReference type="Pfam" id="PF04580">
    <property type="entry name" value="Pox_D3"/>
    <property type="match status" value="1"/>
</dbReference>
<organism>
    <name type="scientific">Camelpox virus (strain M-96)</name>
    <dbReference type="NCBI Taxonomy" id="203173"/>
    <lineage>
        <taxon>Viruses</taxon>
        <taxon>Varidnaviria</taxon>
        <taxon>Bamfordvirae</taxon>
        <taxon>Nucleocytoviricota</taxon>
        <taxon>Pokkesviricetes</taxon>
        <taxon>Chitovirales</taxon>
        <taxon>Poxviridae</taxon>
        <taxon>Chordopoxvirinae</taxon>
        <taxon>Orthopoxvirus</taxon>
        <taxon>Camelpox virus</taxon>
    </lineage>
</organism>
<proteinExistence type="evidence at transcript level"/>
<reference key="1">
    <citation type="journal article" date="2002" name="Virology">
        <title>The genome of camelpox virus.</title>
        <authorList>
            <person name="Afonso C.L."/>
            <person name="Tulman E.R."/>
            <person name="Lu Z."/>
            <person name="Zsak L."/>
            <person name="Sandybaev N.T."/>
            <person name="Kerembekova U.Z."/>
            <person name="Zaitsev V.L."/>
            <person name="Kutish G.F."/>
            <person name="Rock D.L."/>
        </authorList>
    </citation>
    <scope>NUCLEOTIDE SEQUENCE [LARGE SCALE GENOMIC DNA]</scope>
</reference>